<keyword id="KW-1003">Cell membrane</keyword>
<keyword id="KW-1015">Disulfide bond</keyword>
<keyword id="KW-0297">G-protein coupled receptor</keyword>
<keyword id="KW-0325">Glycoprotein</keyword>
<keyword id="KW-0472">Membrane</keyword>
<keyword id="KW-0675">Receptor</keyword>
<keyword id="KW-1185">Reference proteome</keyword>
<keyword id="KW-0807">Transducer</keyword>
<keyword id="KW-0812">Transmembrane</keyword>
<keyword id="KW-1133">Transmembrane helix</keyword>
<organism>
    <name type="scientific">Rattus norvegicus</name>
    <name type="common">Rat</name>
    <dbReference type="NCBI Taxonomy" id="10116"/>
    <lineage>
        <taxon>Eukaryota</taxon>
        <taxon>Metazoa</taxon>
        <taxon>Chordata</taxon>
        <taxon>Craniata</taxon>
        <taxon>Vertebrata</taxon>
        <taxon>Euteleostomi</taxon>
        <taxon>Mammalia</taxon>
        <taxon>Eutheria</taxon>
        <taxon>Euarchontoglires</taxon>
        <taxon>Glires</taxon>
        <taxon>Rodentia</taxon>
        <taxon>Myomorpha</taxon>
        <taxon>Muroidea</taxon>
        <taxon>Muridae</taxon>
        <taxon>Murinae</taxon>
        <taxon>Rattus</taxon>
    </lineage>
</organism>
<accession>Q923X8</accession>
<accession>Q5QD22</accession>
<gene>
    <name evidence="7 9" type="primary">Taar7b</name>
    <name evidence="6" type="synonym">Ta12</name>
    <name type="synonym">Tar12v</name>
    <name evidence="6" type="synonym">Trar12</name>
</gene>
<reference key="1">
    <citation type="journal article" date="2001" name="Proc. Natl. Acad. Sci. U.S.A.">
        <title>Trace amines: identification of a family of mammalian G protein-coupled receptors.</title>
        <authorList>
            <person name="Borowsky B."/>
            <person name="Adham N."/>
            <person name="Jones K.A."/>
            <person name="Raddatz R."/>
            <person name="Artymyshyn R."/>
            <person name="Ogozalek K.L."/>
            <person name="Durkin M.M."/>
            <person name="Lakhlani P.P."/>
            <person name="Bonini J.A."/>
            <person name="Pathirana S."/>
            <person name="Boyle N."/>
            <person name="Pu X."/>
            <person name="Kouranova E."/>
            <person name="Lichtblau H."/>
            <person name="Ochoa F.Y."/>
            <person name="Branchek T.A."/>
            <person name="Gerald C."/>
        </authorList>
    </citation>
    <scope>NUCLEOTIDE SEQUENCE [GENOMIC DNA]</scope>
    <source>
        <strain>Sprague-Dawley</strain>
    </source>
</reference>
<reference key="2">
    <citation type="journal article" date="2005" name="Genomics">
        <title>Trace amine-associated receptors form structurally and functionally distinct subfamilies of novel G protein-coupled receptors.</title>
        <authorList>
            <person name="Lindemann L."/>
            <person name="Ebeling M."/>
            <person name="Kratochwil N.A."/>
            <person name="Bunzow J.R."/>
            <person name="Grandy D.K."/>
            <person name="Hoener M.C."/>
        </authorList>
    </citation>
    <scope>NUCLEOTIDE SEQUENCE [GENOMIC DNA]</scope>
    <source>
        <strain>WIST/Crl</strain>
    </source>
</reference>
<reference key="3">
    <citation type="journal article" date="2012" name="ACS Chem. Biol.">
        <title>Agonists for 13 trace amine-associated receptors provide insight into the molecular basis of odor selectivity.</title>
        <authorList>
            <person name="Ferrero D.M."/>
            <person name="Wacker D."/>
            <person name="Roque M.A."/>
            <person name="Baldwin M.W."/>
            <person name="Stevens R.C."/>
            <person name="Liberles S.D."/>
        </authorList>
    </citation>
    <scope>FUNCTION</scope>
</reference>
<name>TAA7B_RAT</name>
<feature type="chain" id="PRO_0000070165" description="Trace amine-associated receptor 7b">
    <location>
        <begin position="1"/>
        <end position="358"/>
    </location>
</feature>
<feature type="topological domain" description="Extracellular" evidence="3">
    <location>
        <begin position="1"/>
        <end position="47"/>
    </location>
</feature>
<feature type="transmembrane region" description="Helical; Name=1" evidence="3">
    <location>
        <begin position="48"/>
        <end position="68"/>
    </location>
</feature>
<feature type="topological domain" description="Cytoplasmic" evidence="3">
    <location>
        <begin position="69"/>
        <end position="83"/>
    </location>
</feature>
<feature type="transmembrane region" description="Helical; Name=2" evidence="3">
    <location>
        <begin position="84"/>
        <end position="104"/>
    </location>
</feature>
<feature type="topological domain" description="Extracellular" evidence="3">
    <location>
        <begin position="105"/>
        <end position="125"/>
    </location>
</feature>
<feature type="transmembrane region" description="Helical; Name=3" evidence="3">
    <location>
        <begin position="126"/>
        <end position="147"/>
    </location>
</feature>
<feature type="topological domain" description="Cytoplasmic" evidence="3">
    <location>
        <begin position="148"/>
        <end position="166"/>
    </location>
</feature>
<feature type="transmembrane region" description="Helical; Name=4" evidence="3">
    <location>
        <begin position="167"/>
        <end position="187"/>
    </location>
</feature>
<feature type="topological domain" description="Extracellular" evidence="3">
    <location>
        <begin position="188"/>
        <end position="211"/>
    </location>
</feature>
<feature type="transmembrane region" description="Helical; Name=5" evidence="3">
    <location>
        <begin position="212"/>
        <end position="232"/>
    </location>
</feature>
<feature type="topological domain" description="Cytoplasmic" evidence="3">
    <location>
        <begin position="233"/>
        <end position="274"/>
    </location>
</feature>
<feature type="transmembrane region" description="Helical; Name=6" evidence="3">
    <location>
        <begin position="275"/>
        <end position="295"/>
    </location>
</feature>
<feature type="topological domain" description="Extracellular" evidence="3">
    <location>
        <begin position="296"/>
        <end position="309"/>
    </location>
</feature>
<feature type="transmembrane region" description="Helical; Name=7" evidence="3">
    <location>
        <begin position="310"/>
        <end position="332"/>
    </location>
</feature>
<feature type="topological domain" description="Cytoplasmic" evidence="3">
    <location>
        <begin position="333"/>
        <end position="358"/>
    </location>
</feature>
<feature type="glycosylation site" description="N-linked (GlcNAc...) asparagine" evidence="3">
    <location>
        <position position="34"/>
    </location>
</feature>
<feature type="glycosylation site" description="N-linked (GlcNAc...) asparagine" evidence="3">
    <location>
        <position position="210"/>
    </location>
</feature>
<feature type="disulfide bond" evidence="1">
    <location>
        <begin position="37"/>
        <end position="201"/>
    </location>
</feature>
<feature type="disulfide bond" evidence="4">
    <location>
        <begin position="120"/>
        <end position="205"/>
    </location>
</feature>
<dbReference type="EMBL" id="AF380200">
    <property type="protein sequence ID" value="AAK71251.1"/>
    <property type="status" value="ALT_INIT"/>
    <property type="molecule type" value="Genomic_DNA"/>
</dbReference>
<dbReference type="EMBL" id="AY702319">
    <property type="protein sequence ID" value="AAV70131.1"/>
    <property type="molecule type" value="Genomic_DNA"/>
</dbReference>
<dbReference type="RefSeq" id="NP_783176.2">
    <property type="nucleotide sequence ID" value="NM_175586.2"/>
</dbReference>
<dbReference type="SMR" id="Q923X8"/>
<dbReference type="FunCoup" id="Q923X8">
    <property type="interactions" value="32"/>
</dbReference>
<dbReference type="STRING" id="10116.ENSRNOP00000021559"/>
<dbReference type="BindingDB" id="Q923X8"/>
<dbReference type="ChEMBL" id="CHEMBL2176813"/>
<dbReference type="GlyCosmos" id="Q923X8">
    <property type="glycosylation" value="2 sites, No reported glycans"/>
</dbReference>
<dbReference type="GlyGen" id="Q923X8">
    <property type="glycosylation" value="2 sites"/>
</dbReference>
<dbReference type="PaxDb" id="10116-ENSRNOP00000021559"/>
<dbReference type="Ensembl" id="ENSRNOT00000021559.5">
    <property type="protein sequence ID" value="ENSRNOP00000021559.3"/>
    <property type="gene ID" value="ENSRNOG00000071181.1"/>
</dbReference>
<dbReference type="GeneID" id="294126"/>
<dbReference type="KEGG" id="rno:294126"/>
<dbReference type="AGR" id="RGD:631392"/>
<dbReference type="CTD" id="209517"/>
<dbReference type="RGD" id="631392">
    <property type="gene designation" value="Taar7b"/>
</dbReference>
<dbReference type="eggNOG" id="KOG3656">
    <property type="taxonomic scope" value="Eukaryota"/>
</dbReference>
<dbReference type="GeneTree" id="ENSGT00940000160273"/>
<dbReference type="HOGENOM" id="CLU_009579_11_0_1"/>
<dbReference type="InParanoid" id="Q923X8"/>
<dbReference type="OMA" id="ITPTHIY"/>
<dbReference type="OrthoDB" id="5959645at2759"/>
<dbReference type="PhylomeDB" id="Q923X8"/>
<dbReference type="TreeFam" id="TF343107"/>
<dbReference type="PRO" id="PR:Q923X8"/>
<dbReference type="Proteomes" id="UP000002494">
    <property type="component" value="Chromosome 1"/>
</dbReference>
<dbReference type="GO" id="GO:0005886">
    <property type="term" value="C:plasma membrane"/>
    <property type="evidence" value="ECO:0000318"/>
    <property type="project" value="GO_Central"/>
</dbReference>
<dbReference type="GO" id="GO:0001594">
    <property type="term" value="F:trace-amine receptor activity"/>
    <property type="evidence" value="ECO:0000314"/>
    <property type="project" value="UniProtKB"/>
</dbReference>
<dbReference type="GO" id="GO:0007186">
    <property type="term" value="P:G protein-coupled receptor signaling pathway"/>
    <property type="evidence" value="ECO:0000318"/>
    <property type="project" value="GO_Central"/>
</dbReference>
<dbReference type="FunFam" id="1.20.1070.10:FF:000030">
    <property type="entry name" value="trace amine-associated receptor 1"/>
    <property type="match status" value="1"/>
</dbReference>
<dbReference type="Gene3D" id="1.20.1070.10">
    <property type="entry name" value="Rhodopsin 7-helix transmembrane proteins"/>
    <property type="match status" value="1"/>
</dbReference>
<dbReference type="InterPro" id="IPR000276">
    <property type="entry name" value="GPCR_Rhodpsn"/>
</dbReference>
<dbReference type="InterPro" id="IPR017452">
    <property type="entry name" value="GPCR_Rhodpsn_7TM"/>
</dbReference>
<dbReference type="InterPro" id="IPR050569">
    <property type="entry name" value="TAAR"/>
</dbReference>
<dbReference type="InterPro" id="IPR009132">
    <property type="entry name" value="TAAR_fam"/>
</dbReference>
<dbReference type="PANTHER" id="PTHR24249">
    <property type="entry name" value="HISTAMINE RECEPTOR-RELATED G-PROTEIN COUPLED RECEPTOR"/>
    <property type="match status" value="1"/>
</dbReference>
<dbReference type="PANTHER" id="PTHR24249:SF78">
    <property type="entry name" value="TRACE AMINE-ASSOCIATED RECEPTOR 7A-RELATED"/>
    <property type="match status" value="1"/>
</dbReference>
<dbReference type="Pfam" id="PF00001">
    <property type="entry name" value="7tm_1"/>
    <property type="match status" value="1"/>
</dbReference>
<dbReference type="PRINTS" id="PR00237">
    <property type="entry name" value="GPCRRHODOPSN"/>
</dbReference>
<dbReference type="PRINTS" id="PR01830">
    <property type="entry name" value="TRACEAMINER"/>
</dbReference>
<dbReference type="SMART" id="SM01381">
    <property type="entry name" value="7TM_GPCR_Srsx"/>
    <property type="match status" value="1"/>
</dbReference>
<dbReference type="SUPFAM" id="SSF81321">
    <property type="entry name" value="Family A G protein-coupled receptor-like"/>
    <property type="match status" value="1"/>
</dbReference>
<dbReference type="PROSITE" id="PS00237">
    <property type="entry name" value="G_PROTEIN_RECEP_F1_1"/>
    <property type="match status" value="1"/>
</dbReference>
<dbReference type="PROSITE" id="PS50262">
    <property type="entry name" value="G_PROTEIN_RECEP_F1_2"/>
    <property type="match status" value="1"/>
</dbReference>
<protein>
    <recommendedName>
        <fullName>Trace amine-associated receptor 7b</fullName>
        <shortName>TaR-7b</shortName>
        <shortName>Trace amine receptor 7b</shortName>
    </recommendedName>
    <alternativeName>
        <fullName evidence="6">Trace amine receptor 12</fullName>
        <shortName evidence="6">TaR-12</shortName>
    </alternativeName>
</protein>
<proteinExistence type="inferred from homology"/>
<comment type="function">
    <text evidence="5 8">Olfactory receptor specific for N,N-dimethylalkylamines trace amines, such as N,N-dimethylcyclohexylamine (PubMed:22545963). Trace amine compounds are enriched in animal body fluids and act on trace amine-associated receptors (TAARs) to elicit both intraspecific and interspecific innate behaviors (PubMed:22545963). Ligand-binding causes a conformation change that triggers signaling via G(s)-class of G alpha proteins (GNAL or GNAS) (Probable).</text>
</comment>
<comment type="subcellular location">
    <subcellularLocation>
        <location evidence="2">Cell membrane</location>
        <topology evidence="3">Multi-pass membrane protein</topology>
    </subcellularLocation>
</comment>
<comment type="domain">
    <text evidence="1">In addition to the well known disulfide bond common to G-protein coupled receptor 1 family, trace amine-associated receptors (TAARs) contain an unique disulfide bond (Cys-37-Cys-201) connecting the N-terminus to the extracellular Loop 2 (ECL2), which is required for agonist-induced receptor activation.</text>
</comment>
<comment type="similarity">
    <text evidence="4">Belongs to the G-protein coupled receptor 1 family.</text>
</comment>
<comment type="sequence caution" evidence="8">
    <conflict type="erroneous initiation">
        <sequence resource="EMBL-CDS" id="AAK71251"/>
    </conflict>
</comment>
<evidence type="ECO:0000250" key="1">
    <source>
        <dbReference type="UniProtKB" id="Q5QD04"/>
    </source>
</evidence>
<evidence type="ECO:0000250" key="2">
    <source>
        <dbReference type="UniProtKB" id="Q923X5"/>
    </source>
</evidence>
<evidence type="ECO:0000255" key="3"/>
<evidence type="ECO:0000255" key="4">
    <source>
        <dbReference type="PROSITE-ProRule" id="PRU00521"/>
    </source>
</evidence>
<evidence type="ECO:0000269" key="5">
    <source>
    </source>
</evidence>
<evidence type="ECO:0000303" key="6">
    <source>
    </source>
</evidence>
<evidence type="ECO:0000303" key="7">
    <source>
    </source>
</evidence>
<evidence type="ECO:0000305" key="8"/>
<evidence type="ECO:0000312" key="9">
    <source>
        <dbReference type="RGD" id="631392"/>
    </source>
</evidence>
<sequence>MATDDDRFPWDQDSILSRDLLSASSMQLCYEKLNRSCVRSPYSPGPRLILYAVFGFGAVLAVCGNLLVMTSILHFRQLHSPANFLVASLACADFLVGLTVMPFSMVRSVEGCWYFGDIYCKFHSSFDGSFCYSSIFHLCFISADRYIAVSDPLIYPTRFTASVSGKCITFSWLLSIIYSFSLFYTGVNEAGLEDLVSALTCVGGCQIAVNQSWVFINFLLFLVPALVMMTVYSKIFLIAKQQAQNIEKMGKQTARASESYKDRVAKRERKAAKTLGIAVAAFLLSWLPYFIDSIIDAFLGFVTPTYVYEILVWIGYYNSAMNPLIYAFFYPWFRKAIKLIVTGKILRENSSATNLFPE</sequence>